<keyword id="KW-1185">Reference proteome</keyword>
<reference key="1">
    <citation type="journal article" date="2001" name="Proc. Natl. Acad. Sci. U.S.A.">
        <title>Complete genomic sequence of Pasteurella multocida Pm70.</title>
        <authorList>
            <person name="May B.J."/>
            <person name="Zhang Q."/>
            <person name="Li L.L."/>
            <person name="Paustian M.L."/>
            <person name="Whittam T.S."/>
            <person name="Kapur V."/>
        </authorList>
    </citation>
    <scope>NUCLEOTIDE SEQUENCE [LARGE SCALE GENOMIC DNA]</scope>
    <source>
        <strain>Pm70</strain>
    </source>
</reference>
<protein>
    <recommendedName>
        <fullName evidence="1">UPF0250 protein PM1928</fullName>
    </recommendedName>
</protein>
<accession>Q9CJR4</accession>
<sequence>MPQAKLKDLLEFPCAFTFKVVGANRADLIDDVVVVVQKYAKGDYNPRQQLSSKGTYNSVSIDIIAEHIEQVEVLYVELAKIDGVRMVL</sequence>
<feature type="chain" id="PRO_0000209304" description="UPF0250 protein PM1928">
    <location>
        <begin position="1"/>
        <end position="88"/>
    </location>
</feature>
<name>Y1928_PASMU</name>
<dbReference type="EMBL" id="AE004439">
    <property type="protein sequence ID" value="AAK04012.1"/>
    <property type="status" value="ALT_INIT"/>
    <property type="molecule type" value="Genomic_DNA"/>
</dbReference>
<dbReference type="SMR" id="Q9CJR4"/>
<dbReference type="STRING" id="272843.PM1928"/>
<dbReference type="EnsemblBacteria" id="AAK04012">
    <property type="protein sequence ID" value="AAK04012"/>
    <property type="gene ID" value="PM1928"/>
</dbReference>
<dbReference type="KEGG" id="pmu:PM1928"/>
<dbReference type="HOGENOM" id="CLU_161438_2_1_6"/>
<dbReference type="Proteomes" id="UP000000809">
    <property type="component" value="Chromosome"/>
</dbReference>
<dbReference type="GO" id="GO:0005829">
    <property type="term" value="C:cytosol"/>
    <property type="evidence" value="ECO:0007669"/>
    <property type="project" value="TreeGrafter"/>
</dbReference>
<dbReference type="Gene3D" id="3.30.70.260">
    <property type="match status" value="1"/>
</dbReference>
<dbReference type="HAMAP" id="MF_00659">
    <property type="entry name" value="UPF0250"/>
    <property type="match status" value="1"/>
</dbReference>
<dbReference type="InterPro" id="IPR007454">
    <property type="entry name" value="UPF0250_YbeD-like"/>
</dbReference>
<dbReference type="InterPro" id="IPR027471">
    <property type="entry name" value="YbeD-like_sf"/>
</dbReference>
<dbReference type="NCBIfam" id="NF003447">
    <property type="entry name" value="PRK04998.1"/>
    <property type="match status" value="1"/>
</dbReference>
<dbReference type="PANTHER" id="PTHR38036">
    <property type="entry name" value="UPF0250 PROTEIN YBED"/>
    <property type="match status" value="1"/>
</dbReference>
<dbReference type="PANTHER" id="PTHR38036:SF1">
    <property type="entry name" value="UPF0250 PROTEIN YBED"/>
    <property type="match status" value="1"/>
</dbReference>
<dbReference type="Pfam" id="PF04359">
    <property type="entry name" value="DUF493"/>
    <property type="match status" value="1"/>
</dbReference>
<dbReference type="SUPFAM" id="SSF117991">
    <property type="entry name" value="YbeD/HP0495-like"/>
    <property type="match status" value="1"/>
</dbReference>
<evidence type="ECO:0000255" key="1">
    <source>
        <dbReference type="HAMAP-Rule" id="MF_00659"/>
    </source>
</evidence>
<evidence type="ECO:0000305" key="2"/>
<comment type="similarity">
    <text evidence="1">Belongs to the UPF0250 family.</text>
</comment>
<comment type="sequence caution" evidence="2">
    <conflict type="erroneous initiation">
        <sequence resource="EMBL-CDS" id="AAK04012"/>
    </conflict>
</comment>
<organism>
    <name type="scientific">Pasteurella multocida (strain Pm70)</name>
    <dbReference type="NCBI Taxonomy" id="272843"/>
    <lineage>
        <taxon>Bacteria</taxon>
        <taxon>Pseudomonadati</taxon>
        <taxon>Pseudomonadota</taxon>
        <taxon>Gammaproteobacteria</taxon>
        <taxon>Pasteurellales</taxon>
        <taxon>Pasteurellaceae</taxon>
        <taxon>Pasteurella</taxon>
    </lineage>
</organism>
<proteinExistence type="inferred from homology"/>
<gene>
    <name type="ordered locus">PM1928</name>
</gene>